<proteinExistence type="evidence at transcript level"/>
<accession>A6QP92</accession>
<reference key="1">
    <citation type="submission" date="2007-07" db="EMBL/GenBank/DDBJ databases">
        <authorList>
            <consortium name="NIH - Mammalian Gene Collection (MGC) project"/>
        </authorList>
    </citation>
    <scope>NUCLEOTIDE SEQUENCE [LARGE SCALE MRNA]</scope>
    <source>
        <strain>Hereford</strain>
        <tissue>Fetal skin</tissue>
    </source>
</reference>
<gene>
    <name type="primary">TCHHL1</name>
</gene>
<evidence type="ECO:0000256" key="1">
    <source>
        <dbReference type="SAM" id="MobiDB-lite"/>
    </source>
</evidence>
<evidence type="ECO:0000305" key="2"/>
<dbReference type="EMBL" id="BC149208">
    <property type="protein sequence ID" value="AAI49209.1"/>
    <property type="status" value="ALT_INIT"/>
    <property type="molecule type" value="mRNA"/>
</dbReference>
<dbReference type="RefSeq" id="NP_001193524.1">
    <property type="nucleotide sequence ID" value="NM_001206595.1"/>
</dbReference>
<dbReference type="SMR" id="A6QP92"/>
<dbReference type="FunCoup" id="A6QP92">
    <property type="interactions" value="3"/>
</dbReference>
<dbReference type="STRING" id="9913.ENSBTAP00000021074"/>
<dbReference type="PaxDb" id="9913-ENSBTAP00000021074"/>
<dbReference type="GeneID" id="518825"/>
<dbReference type="KEGG" id="bta:518825"/>
<dbReference type="CTD" id="126637"/>
<dbReference type="eggNOG" id="ENOG502RU01">
    <property type="taxonomic scope" value="Eukaryota"/>
</dbReference>
<dbReference type="InParanoid" id="A6QP92"/>
<dbReference type="OrthoDB" id="9450604at2759"/>
<dbReference type="Proteomes" id="UP000009136">
    <property type="component" value="Unplaced"/>
</dbReference>
<dbReference type="GO" id="GO:0046914">
    <property type="term" value="F:transition metal ion binding"/>
    <property type="evidence" value="ECO:0007669"/>
    <property type="project" value="InterPro"/>
</dbReference>
<dbReference type="CDD" id="cd00213">
    <property type="entry name" value="S-100"/>
    <property type="match status" value="1"/>
</dbReference>
<dbReference type="Gene3D" id="1.10.238.10">
    <property type="entry name" value="EF-hand"/>
    <property type="match status" value="1"/>
</dbReference>
<dbReference type="InterPro" id="IPR011992">
    <property type="entry name" value="EF-hand-dom_pair"/>
</dbReference>
<dbReference type="InterPro" id="IPR034325">
    <property type="entry name" value="S-100_dom"/>
</dbReference>
<dbReference type="InterPro" id="IPR013787">
    <property type="entry name" value="S100_Ca-bd_sub"/>
</dbReference>
<dbReference type="InterPro" id="IPR042937">
    <property type="entry name" value="TCHHL1"/>
</dbReference>
<dbReference type="PANTHER" id="PTHR47612">
    <property type="entry name" value="TRICHOHYALIN-LIKE PROTEIN 1"/>
    <property type="match status" value="1"/>
</dbReference>
<dbReference type="PANTHER" id="PTHR47612:SF1">
    <property type="entry name" value="TRICHOHYALIN-LIKE PROTEIN 1"/>
    <property type="match status" value="1"/>
</dbReference>
<dbReference type="Pfam" id="PF01023">
    <property type="entry name" value="S_100"/>
    <property type="match status" value="1"/>
</dbReference>
<dbReference type="SMART" id="SM01394">
    <property type="entry name" value="S_100"/>
    <property type="match status" value="1"/>
</dbReference>
<dbReference type="SUPFAM" id="SSF47473">
    <property type="entry name" value="EF-hand"/>
    <property type="match status" value="1"/>
</dbReference>
<name>TCHL1_BOVIN</name>
<sequence>MPQLLRDILCVIETFHKYAREDAATLTCTELKQLIQSEFEDIFQPCAIHAVERNLNLLNIDSNGAISFDEFVLAIFSFLNVCYLDTQSLLNSEPRQVSKPEGMPHDMGLQVTNETDQWTEGTSQTQDKVVLPSGTASSTHLSLEERAVEHNRVDPQGHTTAHKLPVETSEHSDSKNQHLKGDEQSQKVDQDVSATGDSRTQRETSKPMAGSEQISSHTKGEGQNKEILQKGDILARKQSGTETGGRFGEQEGSLGILHSPLEETTQRPGGSSEDQEVAGEKGVKGHPKSQEPSVQGKDEPSSEHVDLPKQAAARKPSQTQKSAAAKDESRTAETPEPPIQEKEYETRDLSVQGENRNVSETPMVRVERKGVRGPEVHQTVGQKQIEEKTQPPALEEPTEDKKYHELQESSKEKNAGEDSETHELNSEGGEQKDSESEGAISPGEEARHAEEGTAEALVNSKNAPEAEGTPGTRERIWELTTLENQSGEKNKMTTKIHDKLVKEDDGYQGEGSEPVATQNDERSPETPNSLTAEDGDSNSETSDLFVQGDSQSQTNPFRGSVQGSDSNNPETQKHLALSEEKRVQEAAVLAVRGEDEQVTEEHAQEHEGQGSATTGRGPAVEPRGHSDTQVFIVRDENTKSLEPGIPGAPNAGITKQLSVRQLPTKKDSRKELKDQSPSTKKEEDGALEAQEDLVKSLDENNAVSQKTCPATLEEETESPQQLAGEQSLSTKEHDPSVSESGLEERMQRDQELCLVERGAEHSSPLYEALQEKMLQQTNVTQGEHQNQAQTASVASPEIRRNQSSASLTNDSSDGLVFFIDRQALQKYIREFLPDEDPTGAQQISAPQALEDKQGRPQREELEPQKEASAPKQ</sequence>
<comment type="similarity">
    <text evidence="2">Belongs to the S-100 family.</text>
</comment>
<comment type="sequence caution" evidence="2">
    <conflict type="erroneous initiation">
        <sequence resource="EMBL-CDS" id="AAI49209"/>
    </conflict>
</comment>
<feature type="chain" id="PRO_0000341542" description="Trichohyalin-like protein 1">
    <location>
        <begin position="1"/>
        <end position="872"/>
    </location>
</feature>
<feature type="domain" description="EF-hand">
    <location>
        <begin position="46"/>
        <end position="81"/>
    </location>
</feature>
<feature type="region of interest" description="Disordered" evidence="1">
    <location>
        <begin position="117"/>
        <end position="759"/>
    </location>
</feature>
<feature type="region of interest" description="Disordered" evidence="1">
    <location>
        <begin position="774"/>
        <end position="813"/>
    </location>
</feature>
<feature type="region of interest" description="Disordered" evidence="1">
    <location>
        <begin position="830"/>
        <end position="872"/>
    </location>
</feature>
<feature type="compositionally biased region" description="Polar residues" evidence="1">
    <location>
        <begin position="117"/>
        <end position="127"/>
    </location>
</feature>
<feature type="compositionally biased region" description="Basic and acidic residues" evidence="1">
    <location>
        <begin position="142"/>
        <end position="155"/>
    </location>
</feature>
<feature type="compositionally biased region" description="Basic and acidic residues" evidence="1">
    <location>
        <begin position="164"/>
        <end position="190"/>
    </location>
</feature>
<feature type="compositionally biased region" description="Basic and acidic residues" evidence="1">
    <location>
        <begin position="218"/>
        <end position="235"/>
    </location>
</feature>
<feature type="compositionally biased region" description="Basic and acidic residues" evidence="1">
    <location>
        <begin position="296"/>
        <end position="307"/>
    </location>
</feature>
<feature type="compositionally biased region" description="Basic and acidic residues" evidence="1">
    <location>
        <begin position="324"/>
        <end position="348"/>
    </location>
</feature>
<feature type="compositionally biased region" description="Basic and acidic residues" evidence="1">
    <location>
        <begin position="365"/>
        <end position="375"/>
    </location>
</feature>
<feature type="compositionally biased region" description="Basic and acidic residues" evidence="1">
    <location>
        <begin position="399"/>
        <end position="435"/>
    </location>
</feature>
<feature type="compositionally biased region" description="Basic and acidic residues" evidence="1">
    <location>
        <begin position="486"/>
        <end position="505"/>
    </location>
</feature>
<feature type="compositionally biased region" description="Polar residues" evidence="1">
    <location>
        <begin position="538"/>
        <end position="570"/>
    </location>
</feature>
<feature type="compositionally biased region" description="Basic and acidic residues" evidence="1">
    <location>
        <begin position="571"/>
        <end position="584"/>
    </location>
</feature>
<feature type="compositionally biased region" description="Basic and acidic residues" evidence="1">
    <location>
        <begin position="592"/>
        <end position="608"/>
    </location>
</feature>
<feature type="compositionally biased region" description="Basic and acidic residues" evidence="1">
    <location>
        <begin position="664"/>
        <end position="684"/>
    </location>
</feature>
<feature type="compositionally biased region" description="Polar residues" evidence="1">
    <location>
        <begin position="699"/>
        <end position="708"/>
    </location>
</feature>
<feature type="compositionally biased region" description="Polar residues" evidence="1">
    <location>
        <begin position="718"/>
        <end position="729"/>
    </location>
</feature>
<feature type="compositionally biased region" description="Basic and acidic residues" evidence="1">
    <location>
        <begin position="730"/>
        <end position="751"/>
    </location>
</feature>
<feature type="compositionally biased region" description="Polar residues" evidence="1">
    <location>
        <begin position="774"/>
        <end position="793"/>
    </location>
</feature>
<feature type="compositionally biased region" description="Polar residues" evidence="1">
    <location>
        <begin position="801"/>
        <end position="812"/>
    </location>
</feature>
<feature type="compositionally biased region" description="Basic and acidic residues" evidence="1">
    <location>
        <begin position="849"/>
        <end position="865"/>
    </location>
</feature>
<protein>
    <recommendedName>
        <fullName>Trichohyalin-like protein 1</fullName>
    </recommendedName>
</protein>
<keyword id="KW-1185">Reference proteome</keyword>
<organism>
    <name type="scientific">Bos taurus</name>
    <name type="common">Bovine</name>
    <dbReference type="NCBI Taxonomy" id="9913"/>
    <lineage>
        <taxon>Eukaryota</taxon>
        <taxon>Metazoa</taxon>
        <taxon>Chordata</taxon>
        <taxon>Craniata</taxon>
        <taxon>Vertebrata</taxon>
        <taxon>Euteleostomi</taxon>
        <taxon>Mammalia</taxon>
        <taxon>Eutheria</taxon>
        <taxon>Laurasiatheria</taxon>
        <taxon>Artiodactyla</taxon>
        <taxon>Ruminantia</taxon>
        <taxon>Pecora</taxon>
        <taxon>Bovidae</taxon>
        <taxon>Bovinae</taxon>
        <taxon>Bos</taxon>
    </lineage>
</organism>